<accession>P24914</accession>
<organismHost>
    <name type="scientific">Saimiri sciureus</name>
    <name type="common">Common squirrel monkey</name>
    <dbReference type="NCBI Taxonomy" id="9521"/>
</organismHost>
<protein>
    <recommendedName>
        <fullName>Uncharacterized gene 11 protein</fullName>
    </recommendedName>
</protein>
<dbReference type="EMBL" id="X64346">
    <property type="protein sequence ID" value="CAA45634.1"/>
    <property type="molecule type" value="Genomic_DNA"/>
</dbReference>
<dbReference type="EMBL" id="M31122">
    <property type="protein sequence ID" value="AAA46167.1"/>
    <property type="molecule type" value="Genomic_DNA"/>
</dbReference>
<dbReference type="RefSeq" id="NP_040213.1">
    <property type="nucleotide sequence ID" value="NC_001350.1"/>
</dbReference>
<dbReference type="KEGG" id="vg:1682514"/>
<dbReference type="Proteomes" id="UP000000587">
    <property type="component" value="Segment"/>
</dbReference>
<dbReference type="InterPro" id="IPR006882">
    <property type="entry name" value="Herpes_Orf11"/>
</dbReference>
<dbReference type="Pfam" id="PF04797">
    <property type="entry name" value="Herpes_ORF11"/>
    <property type="match status" value="1"/>
</dbReference>
<sequence>METPKHIRGVWRRDSVLKHREKKFNYSFWNCSVHEHFISITNNREIHILPDDLLLPRCPSIRAILFKQIPSFKFSGSRSGPPGTVTSLYVYGHSKNLIKIKPMVVSECEQELIFKITFALECTIPPGSMEIFILPITFLKLDGLYLLCLEDYTSRIMSTSCMQMGTYLASETPQVFLKGGPVLNKHEPMPYLMAQKTKPFDKKMARVHTVQNEVCEVNSIYRGENHVKVAIQKDSEDINFLDTVVVGLTMTNRALVAFEYNPYFSCPWDWKRQSIPIIYDGPCIRIPAGRLAPVKYNNTYSSIYPNATAIITNSDSCADFHISDCEWKPGKTACIVVTNTSTISVTISSGTHLGEAVFILAPKFFCRKIMSKTHVQKLSSAICLPGNVTINSNKVPKLADLSTYK</sequence>
<organism>
    <name type="scientific">Saimiriine herpesvirus 2 (strain 11)</name>
    <name type="common">SaHV-2</name>
    <name type="synonym">Herpesvirus saimiri</name>
    <dbReference type="NCBI Taxonomy" id="10383"/>
    <lineage>
        <taxon>Viruses</taxon>
        <taxon>Duplodnaviria</taxon>
        <taxon>Heunggongvirae</taxon>
        <taxon>Peploviricota</taxon>
        <taxon>Herviviricetes</taxon>
        <taxon>Herpesvirales</taxon>
        <taxon>Orthoherpesviridae</taxon>
        <taxon>Gammaherpesvirinae</taxon>
        <taxon>Rhadinovirus</taxon>
        <taxon>Rhadinovirus saimiriinegamma2</taxon>
        <taxon>Saimiriine herpesvirus 2</taxon>
    </lineage>
</organism>
<reference key="1">
    <citation type="journal article" date="1990" name="Virology">
        <title>Structural organization of the conserved gene block of Herpesvirus saimiri coding for DNA polymerase, glycoprotein B, and major DNA binding protein.</title>
        <authorList>
            <person name="Albrecht J.-C."/>
            <person name="Fleckenstein B."/>
        </authorList>
    </citation>
    <scope>NUCLEOTIDE SEQUENCE [GENOMIC DNA]</scope>
</reference>
<reference key="2">
    <citation type="journal article" date="1992" name="J. Virol.">
        <title>Primary structure of the herpesvirus saimiri genome.</title>
        <authorList>
            <person name="Albrecht J.-C."/>
            <person name="Nicholas J."/>
            <person name="Biller D."/>
            <person name="Cameron K.R."/>
            <person name="Biesinger B."/>
            <person name="Newman C."/>
            <person name="Wittmann S."/>
            <person name="Craxton M.A."/>
            <person name="Coleman H."/>
            <person name="Fleckenstein B."/>
            <person name="Honess R.W."/>
        </authorList>
    </citation>
    <scope>NUCLEOTIDE SEQUENCE [LARGE SCALE GENOMIC DNA]</scope>
</reference>
<keyword id="KW-1185">Reference proteome</keyword>
<gene>
    <name type="primary">11</name>
    <name type="synonym">KCRF4</name>
</gene>
<feature type="chain" id="PRO_0000116342" description="Uncharacterized gene 11 protein">
    <location>
        <begin position="1"/>
        <end position="405"/>
    </location>
</feature>
<name>VG11_SHV21</name>
<proteinExistence type="predicted"/>